<dbReference type="EC" id="2.3.1.48" evidence="1 3"/>
<dbReference type="EMBL" id="AC005770">
    <property type="protein sequence ID" value="AAC79612.1"/>
    <property type="molecule type" value="Genomic_DNA"/>
</dbReference>
<dbReference type="EMBL" id="CP002685">
    <property type="protein sequence ID" value="AEC09627.1"/>
    <property type="molecule type" value="Genomic_DNA"/>
</dbReference>
<dbReference type="EMBL" id="BT004781">
    <property type="protein sequence ID" value="AAO44047.1"/>
    <property type="molecule type" value="mRNA"/>
</dbReference>
<dbReference type="PIR" id="B84812">
    <property type="entry name" value="B84812"/>
</dbReference>
<dbReference type="RefSeq" id="NP_181435.1">
    <property type="nucleotide sequence ID" value="NM_129459.4"/>
</dbReference>
<dbReference type="PDB" id="7OVV">
    <property type="method" value="X-ray"/>
    <property type="resolution" value="1.45 A"/>
    <property type="chains" value="A/B=29-226"/>
</dbReference>
<dbReference type="PDB" id="8RMZ">
    <property type="method" value="X-ray"/>
    <property type="resolution" value="1.74 A"/>
    <property type="chains" value="A=1-236"/>
</dbReference>
<dbReference type="PDB" id="8XJ9">
    <property type="method" value="X-ray"/>
    <property type="resolution" value="1.10 A"/>
    <property type="chains" value="A=30-236"/>
</dbReference>
<dbReference type="PDB" id="8XJB">
    <property type="method" value="X-ray"/>
    <property type="resolution" value="1.45 A"/>
    <property type="chains" value="A=30-236"/>
</dbReference>
<dbReference type="PDB" id="8XJF">
    <property type="method" value="X-ray"/>
    <property type="resolution" value="2.00 A"/>
    <property type="chains" value="A=30-236"/>
</dbReference>
<dbReference type="PDB" id="8XJH">
    <property type="method" value="X-ray"/>
    <property type="resolution" value="1.75 A"/>
    <property type="chains" value="A/B=30-236"/>
</dbReference>
<dbReference type="PDBsum" id="7OVV"/>
<dbReference type="PDBsum" id="8RMZ"/>
<dbReference type="PDBsum" id="8XJ9"/>
<dbReference type="PDBsum" id="8XJB"/>
<dbReference type="PDBsum" id="8XJF"/>
<dbReference type="PDBsum" id="8XJH"/>
<dbReference type="SMR" id="Q9ZV06"/>
<dbReference type="BioGRID" id="3827">
    <property type="interactions" value="8"/>
</dbReference>
<dbReference type="FunCoup" id="Q9ZV06">
    <property type="interactions" value="577"/>
</dbReference>
<dbReference type="IntAct" id="Q9ZV06">
    <property type="interactions" value="8"/>
</dbReference>
<dbReference type="STRING" id="3702.Q9ZV06"/>
<dbReference type="GlyGen" id="Q9ZV06">
    <property type="glycosylation" value="1 site"/>
</dbReference>
<dbReference type="PaxDb" id="3702-AT2G39020.1"/>
<dbReference type="ProteomicsDB" id="251037"/>
<dbReference type="EnsemblPlants" id="AT2G39020.1">
    <property type="protein sequence ID" value="AT2G39020.1"/>
    <property type="gene ID" value="AT2G39020"/>
</dbReference>
<dbReference type="GeneID" id="818488"/>
<dbReference type="Gramene" id="AT2G39020.1">
    <property type="protein sequence ID" value="AT2G39020.1"/>
    <property type="gene ID" value="AT2G39020"/>
</dbReference>
<dbReference type="KEGG" id="ath:AT2G39020"/>
<dbReference type="Araport" id="AT2G39020"/>
<dbReference type="TAIR" id="AT2G39020">
    <property type="gene designation" value="NATA2"/>
</dbReference>
<dbReference type="eggNOG" id="KOG3216">
    <property type="taxonomic scope" value="Eukaryota"/>
</dbReference>
<dbReference type="HOGENOM" id="CLU_013985_41_0_1"/>
<dbReference type="InParanoid" id="Q9ZV06"/>
<dbReference type="OMA" id="QSEWVRY"/>
<dbReference type="PhylomeDB" id="Q9ZV06"/>
<dbReference type="BioCyc" id="ARA:AT2G39020-MONOMER"/>
<dbReference type="CD-CODE" id="4299E36E">
    <property type="entry name" value="Nucleolus"/>
</dbReference>
<dbReference type="PRO" id="PR:Q9ZV06"/>
<dbReference type="Proteomes" id="UP000006548">
    <property type="component" value="Chromosome 2"/>
</dbReference>
<dbReference type="ExpressionAtlas" id="Q9ZV06">
    <property type="expression patterns" value="baseline and differential"/>
</dbReference>
<dbReference type="GO" id="GO:0005829">
    <property type="term" value="C:cytosol"/>
    <property type="evidence" value="ECO:0000314"/>
    <property type="project" value="TAIR"/>
</dbReference>
<dbReference type="GO" id="GO:0005634">
    <property type="term" value="C:nucleus"/>
    <property type="evidence" value="ECO:0007669"/>
    <property type="project" value="UniProtKB-SubCell"/>
</dbReference>
<dbReference type="GO" id="GO:0008080">
    <property type="term" value="F:N-acetyltransferase activity"/>
    <property type="evidence" value="ECO:0000314"/>
    <property type="project" value="TAIR"/>
</dbReference>
<dbReference type="GO" id="GO:0061733">
    <property type="term" value="F:protein-lysine-acetyltransferase activity"/>
    <property type="evidence" value="ECO:0007669"/>
    <property type="project" value="RHEA"/>
</dbReference>
<dbReference type="GO" id="GO:0004596">
    <property type="term" value="F:protein-N-terminal amino-acid acetyltransferase activity"/>
    <property type="evidence" value="ECO:0007669"/>
    <property type="project" value="RHEA"/>
</dbReference>
<dbReference type="CDD" id="cd04301">
    <property type="entry name" value="NAT_SF"/>
    <property type="match status" value="1"/>
</dbReference>
<dbReference type="FunFam" id="3.40.630.30:FF:000099">
    <property type="entry name" value="probable acetyltransferase NATA1-like"/>
    <property type="match status" value="1"/>
</dbReference>
<dbReference type="Gene3D" id="3.40.630.30">
    <property type="match status" value="1"/>
</dbReference>
<dbReference type="InterPro" id="IPR016181">
    <property type="entry name" value="Acyl_CoA_acyltransferase"/>
</dbReference>
<dbReference type="InterPro" id="IPR051016">
    <property type="entry name" value="Diverse_Substrate_AcTransf"/>
</dbReference>
<dbReference type="InterPro" id="IPR000182">
    <property type="entry name" value="GNAT_dom"/>
</dbReference>
<dbReference type="PANTHER" id="PTHR10545">
    <property type="entry name" value="DIAMINE N-ACETYLTRANSFERASE"/>
    <property type="match status" value="1"/>
</dbReference>
<dbReference type="PANTHER" id="PTHR10545:SF29">
    <property type="entry name" value="GH14572P-RELATED"/>
    <property type="match status" value="1"/>
</dbReference>
<dbReference type="Pfam" id="PF00583">
    <property type="entry name" value="Acetyltransf_1"/>
    <property type="match status" value="1"/>
</dbReference>
<dbReference type="SUPFAM" id="SSF55729">
    <property type="entry name" value="Acyl-CoA N-acyltransferases (Nat)"/>
    <property type="match status" value="1"/>
</dbReference>
<dbReference type="PROSITE" id="PS51186">
    <property type="entry name" value="GNAT"/>
    <property type="match status" value="1"/>
</dbReference>
<name>GNAT8_ARATH</name>
<organism>
    <name type="scientific">Arabidopsis thaliana</name>
    <name type="common">Mouse-ear cress</name>
    <dbReference type="NCBI Taxonomy" id="3702"/>
    <lineage>
        <taxon>Eukaryota</taxon>
        <taxon>Viridiplantae</taxon>
        <taxon>Streptophyta</taxon>
        <taxon>Embryophyta</taxon>
        <taxon>Tracheophyta</taxon>
        <taxon>Spermatophyta</taxon>
        <taxon>Magnoliopsida</taxon>
        <taxon>eudicotyledons</taxon>
        <taxon>Gunneridae</taxon>
        <taxon>Pentapetalae</taxon>
        <taxon>rosids</taxon>
        <taxon>malvids</taxon>
        <taxon>Brassicales</taxon>
        <taxon>Brassicaceae</taxon>
        <taxon>Camelineae</taxon>
        <taxon>Arabidopsis</taxon>
    </lineage>
</organism>
<proteinExistence type="evidence at protein level"/>
<keyword id="KW-0002">3D-structure</keyword>
<keyword id="KW-0012">Acyltransferase</keyword>
<keyword id="KW-0963">Cytoplasm</keyword>
<keyword id="KW-0539">Nucleus</keyword>
<keyword id="KW-1185">Reference proteome</keyword>
<keyword id="KW-0808">Transferase</keyword>
<evidence type="ECO:0000250" key="1">
    <source>
        <dbReference type="UniProtKB" id="Q7X9V3"/>
    </source>
</evidence>
<evidence type="ECO:0000250" key="2">
    <source>
        <dbReference type="UniProtKB" id="Q96F10"/>
    </source>
</evidence>
<evidence type="ECO:0000255" key="3">
    <source>
        <dbReference type="PROSITE-ProRule" id="PRU00532"/>
    </source>
</evidence>
<evidence type="ECO:0000269" key="4">
    <source>
    </source>
</evidence>
<evidence type="ECO:0000303" key="5">
    <source>
    </source>
</evidence>
<evidence type="ECO:0000305" key="6"/>
<evidence type="ECO:0000312" key="7">
    <source>
        <dbReference type="Araport" id="AT2G39020"/>
    </source>
</evidence>
<evidence type="ECO:0000312" key="8">
    <source>
        <dbReference type="EMBL" id="AAC79612.1"/>
    </source>
</evidence>
<evidence type="ECO:0007829" key="9">
    <source>
        <dbReference type="PDB" id="7OVV"/>
    </source>
</evidence>
<feature type="chain" id="PRO_0000423401" description="GCN5-related N-acetyltransferase 8">
    <location>
        <begin position="1"/>
        <end position="236"/>
    </location>
</feature>
<feature type="domain" description="N-acetyltransferase" evidence="3">
    <location>
        <begin position="96"/>
        <end position="235"/>
    </location>
</feature>
<feature type="active site" description="Proton donor" evidence="2">
    <location>
        <position position="207"/>
    </location>
</feature>
<feature type="binding site" evidence="2">
    <location>
        <begin position="161"/>
        <end position="163"/>
    </location>
    <ligand>
        <name>acetyl-CoA</name>
        <dbReference type="ChEBI" id="CHEBI:57288"/>
    </ligand>
</feature>
<feature type="binding site" evidence="2">
    <location>
        <begin position="169"/>
        <end position="174"/>
    </location>
    <ligand>
        <name>acetyl-CoA</name>
        <dbReference type="ChEBI" id="CHEBI:57288"/>
    </ligand>
</feature>
<feature type="binding site" evidence="2">
    <location>
        <begin position="200"/>
        <end position="202"/>
    </location>
    <ligand>
        <name>acetyl-CoA</name>
        <dbReference type="ChEBI" id="CHEBI:57288"/>
    </ligand>
</feature>
<feature type="binding site" evidence="2">
    <location>
        <position position="207"/>
    </location>
    <ligand>
        <name>acetyl-CoA</name>
        <dbReference type="ChEBI" id="CHEBI:57288"/>
    </ligand>
</feature>
<feature type="strand" evidence="9">
    <location>
        <begin position="29"/>
        <end position="36"/>
    </location>
</feature>
<feature type="helix" evidence="9">
    <location>
        <begin position="39"/>
        <end position="41"/>
    </location>
</feature>
<feature type="helix" evidence="9">
    <location>
        <begin position="42"/>
        <end position="56"/>
    </location>
</feature>
<feature type="helix" evidence="9">
    <location>
        <begin position="59"/>
        <end position="61"/>
    </location>
</feature>
<feature type="helix" evidence="9">
    <location>
        <begin position="66"/>
        <end position="73"/>
    </location>
</feature>
<feature type="strand" evidence="9">
    <location>
        <begin position="74"/>
        <end position="76"/>
    </location>
</feature>
<feature type="turn" evidence="9">
    <location>
        <begin position="78"/>
        <end position="80"/>
    </location>
</feature>
<feature type="strand" evidence="9">
    <location>
        <begin position="83"/>
        <end position="92"/>
    </location>
</feature>
<feature type="strand" evidence="9">
    <location>
        <begin position="109"/>
        <end position="117"/>
    </location>
</feature>
<feature type="helix" evidence="9">
    <location>
        <begin position="124"/>
        <end position="126"/>
    </location>
</feature>
<feature type="strand" evidence="9">
    <location>
        <begin position="136"/>
        <end position="148"/>
    </location>
</feature>
<feature type="helix" evidence="9">
    <location>
        <begin position="149"/>
        <end position="151"/>
    </location>
</feature>
<feature type="strand" evidence="9">
    <location>
        <begin position="153"/>
        <end position="163"/>
    </location>
</feature>
<feature type="helix" evidence="9">
    <location>
        <begin position="165"/>
        <end position="167"/>
    </location>
</feature>
<feature type="strand" evidence="9">
    <location>
        <begin position="169"/>
        <end position="171"/>
    </location>
</feature>
<feature type="helix" evidence="9">
    <location>
        <begin position="172"/>
        <end position="187"/>
    </location>
</feature>
<feature type="strand" evidence="9">
    <location>
        <begin position="192"/>
        <end position="197"/>
    </location>
</feature>
<feature type="helix" evidence="9">
    <location>
        <begin position="201"/>
        <end position="208"/>
    </location>
</feature>
<feature type="turn" evidence="9">
    <location>
        <begin position="209"/>
        <end position="211"/>
    </location>
</feature>
<feature type="strand" evidence="9">
    <location>
        <begin position="216"/>
        <end position="223"/>
    </location>
</feature>
<reference key="1">
    <citation type="journal article" date="1999" name="Nature">
        <title>Sequence and analysis of chromosome 2 of the plant Arabidopsis thaliana.</title>
        <authorList>
            <person name="Lin X."/>
            <person name="Kaul S."/>
            <person name="Rounsley S.D."/>
            <person name="Shea T.P."/>
            <person name="Benito M.-I."/>
            <person name="Town C.D."/>
            <person name="Fujii C.Y."/>
            <person name="Mason T.M."/>
            <person name="Bowman C.L."/>
            <person name="Barnstead M.E."/>
            <person name="Feldblyum T.V."/>
            <person name="Buell C.R."/>
            <person name="Ketchum K.A."/>
            <person name="Lee J.J."/>
            <person name="Ronning C.M."/>
            <person name="Koo H.L."/>
            <person name="Moffat K.S."/>
            <person name="Cronin L.A."/>
            <person name="Shen M."/>
            <person name="Pai G."/>
            <person name="Van Aken S."/>
            <person name="Umayam L."/>
            <person name="Tallon L.J."/>
            <person name="Gill J.E."/>
            <person name="Adams M.D."/>
            <person name="Carrera A.J."/>
            <person name="Creasy T.H."/>
            <person name="Goodman H.M."/>
            <person name="Somerville C.R."/>
            <person name="Copenhaver G.P."/>
            <person name="Preuss D."/>
            <person name="Nierman W.C."/>
            <person name="White O."/>
            <person name="Eisen J.A."/>
            <person name="Salzberg S.L."/>
            <person name="Fraser C.M."/>
            <person name="Venter J.C."/>
        </authorList>
    </citation>
    <scope>NUCLEOTIDE SEQUENCE [LARGE SCALE GENOMIC DNA]</scope>
    <source>
        <strain>cv. Columbia</strain>
    </source>
</reference>
<reference key="2">
    <citation type="journal article" date="2017" name="Plant J.">
        <title>Araport11: a complete reannotation of the Arabidopsis thaliana reference genome.</title>
        <authorList>
            <person name="Cheng C.Y."/>
            <person name="Krishnakumar V."/>
            <person name="Chan A.P."/>
            <person name="Thibaud-Nissen F."/>
            <person name="Schobel S."/>
            <person name="Town C.D."/>
        </authorList>
    </citation>
    <scope>GENOME REANNOTATION</scope>
    <source>
        <strain>cv. Columbia</strain>
    </source>
</reference>
<reference key="3">
    <citation type="journal article" date="2003" name="Science">
        <title>Empirical analysis of transcriptional activity in the Arabidopsis genome.</title>
        <authorList>
            <person name="Yamada K."/>
            <person name="Lim J."/>
            <person name="Dale J.M."/>
            <person name="Chen H."/>
            <person name="Shinn P."/>
            <person name="Palm C.J."/>
            <person name="Southwick A.M."/>
            <person name="Wu H.C."/>
            <person name="Kim C.J."/>
            <person name="Nguyen M."/>
            <person name="Pham P.K."/>
            <person name="Cheuk R.F."/>
            <person name="Karlin-Newmann G."/>
            <person name="Liu S.X."/>
            <person name="Lam B."/>
            <person name="Sakano H."/>
            <person name="Wu T."/>
            <person name="Yu G."/>
            <person name="Miranda M."/>
            <person name="Quach H.L."/>
            <person name="Tripp M."/>
            <person name="Chang C.H."/>
            <person name="Lee J.M."/>
            <person name="Toriumi M.J."/>
            <person name="Chan M.M."/>
            <person name="Tang C.C."/>
            <person name="Onodera C.S."/>
            <person name="Deng J.M."/>
            <person name="Akiyama K."/>
            <person name="Ansari Y."/>
            <person name="Arakawa T."/>
            <person name="Banh J."/>
            <person name="Banno F."/>
            <person name="Bowser L."/>
            <person name="Brooks S.Y."/>
            <person name="Carninci P."/>
            <person name="Chao Q."/>
            <person name="Choy N."/>
            <person name="Enju A."/>
            <person name="Goldsmith A.D."/>
            <person name="Gurjal M."/>
            <person name="Hansen N.F."/>
            <person name="Hayashizaki Y."/>
            <person name="Johnson-Hopson C."/>
            <person name="Hsuan V.W."/>
            <person name="Iida K."/>
            <person name="Karnes M."/>
            <person name="Khan S."/>
            <person name="Koesema E."/>
            <person name="Ishida J."/>
            <person name="Jiang P.X."/>
            <person name="Jones T."/>
            <person name="Kawai J."/>
            <person name="Kamiya A."/>
            <person name="Meyers C."/>
            <person name="Nakajima M."/>
            <person name="Narusaka M."/>
            <person name="Seki M."/>
            <person name="Sakurai T."/>
            <person name="Satou M."/>
            <person name="Tamse R."/>
            <person name="Vaysberg M."/>
            <person name="Wallender E.K."/>
            <person name="Wong C."/>
            <person name="Yamamura Y."/>
            <person name="Yuan S."/>
            <person name="Shinozaki K."/>
            <person name="Davis R.W."/>
            <person name="Theologis A."/>
            <person name="Ecker J.R."/>
        </authorList>
    </citation>
    <scope>NUCLEOTIDE SEQUENCE [LARGE SCALE MRNA]</scope>
    <source>
        <strain>cv. Columbia</strain>
    </source>
</reference>
<reference key="4">
    <citation type="journal article" date="2020" name="Mol. Syst. Biol.">
        <title>Dual lysine and N-terminal acetyltransferases reveal the complexity underpinning protein acetylation.</title>
        <authorList>
            <person name="Bienvenut W.V."/>
            <person name="Bruenje A."/>
            <person name="Boyer J.-B."/>
            <person name="Muehlenbeck J.S."/>
            <person name="Bernal G."/>
            <person name="Lassowskat I."/>
            <person name="Dian C."/>
            <person name="Linster E."/>
            <person name="Dinh T.V."/>
            <person name="Koskela M.M."/>
            <person name="Jung V."/>
            <person name="Seidel J."/>
            <person name="Schyrba L.K."/>
            <person name="Ivanauskaite A."/>
            <person name="Eirich J."/>
            <person name="Hell R."/>
            <person name="Schwarzer D."/>
            <person name="Mulo P."/>
            <person name="Wirtz M."/>
            <person name="Meinnel T."/>
            <person name="Giglione C."/>
            <person name="Finkemeier I."/>
        </authorList>
    </citation>
    <scope>SUBCELLULAR LOCATION</scope>
    <scope>TISSUE SPECIFICITY</scope>
    <scope>GENE FAMILY</scope>
    <scope>NOMENCLATURE</scope>
    <source>
        <strain>cv. Columbia</strain>
    </source>
</reference>
<sequence length="236" mass="26440">MAAAAPPPPPTAAPEPNMVAPLISPIGHPMFSRIRLATPSDVPFIHKLIHQMAVFERLTHLFSATESGLASTLFTSRPFQSFTVFLLEVSRSPFPATITSSPSPDFTPFFKTHNLDLPIDDPESYNFSPDMLNDVVVAGFVLFFPNYSSFLSKPGFYIEDIFVREPYRRKGFGSMLLTAVAKQAVKMGYGRVEWVVLDWNVNAIKFYEQMGAQILQEWRVCRLTGDALEAFDQVNI</sequence>
<gene>
    <name evidence="5" type="primary">GNAT8</name>
    <name evidence="7" type="ordered locus">At2g39020</name>
    <name evidence="8" type="ORF">T7F6.19</name>
</gene>
<comment type="function">
    <text evidence="1">Probable protein acetyltransferase with dual specificity triggering both N-alpha-acetylation (NTA) and epsilon-lysine acetylation (KA).</text>
</comment>
<comment type="catalytic activity">
    <reaction evidence="1">
        <text>an N-terminal L-alpha-aminoacyl-[protein] + acetyl-CoA = N-terminal N(alpha)-acetyl-L-alpha-aminoacyl-[protein] + CoA + H(+)</text>
        <dbReference type="Rhea" id="RHEA:21028"/>
        <dbReference type="Rhea" id="RHEA-COMP:10636"/>
        <dbReference type="Rhea" id="RHEA-COMP:15589"/>
        <dbReference type="ChEBI" id="CHEBI:15378"/>
        <dbReference type="ChEBI" id="CHEBI:57287"/>
        <dbReference type="ChEBI" id="CHEBI:57288"/>
        <dbReference type="ChEBI" id="CHEBI:78597"/>
        <dbReference type="ChEBI" id="CHEBI:78598"/>
    </reaction>
</comment>
<comment type="catalytic activity">
    <reaction evidence="1">
        <text>L-lysyl-[protein] + acetyl-CoA = N(6)-acetyl-L-lysyl-[protein] + CoA + H(+)</text>
        <dbReference type="Rhea" id="RHEA:45948"/>
        <dbReference type="Rhea" id="RHEA-COMP:9752"/>
        <dbReference type="Rhea" id="RHEA-COMP:10731"/>
        <dbReference type="ChEBI" id="CHEBI:15378"/>
        <dbReference type="ChEBI" id="CHEBI:29969"/>
        <dbReference type="ChEBI" id="CHEBI:57287"/>
        <dbReference type="ChEBI" id="CHEBI:57288"/>
        <dbReference type="ChEBI" id="CHEBI:61930"/>
        <dbReference type="EC" id="2.3.1.48"/>
    </reaction>
</comment>
<comment type="subunit">
    <text evidence="1">Oligomer.</text>
</comment>
<comment type="subcellular location">
    <subcellularLocation>
        <location evidence="4">Cytoplasm</location>
    </subcellularLocation>
    <subcellularLocation>
        <location evidence="4">Nucleus</location>
    </subcellularLocation>
</comment>
<comment type="tissue specificity">
    <text evidence="4">Expressed throughout the plant.</text>
</comment>
<comment type="similarity">
    <text evidence="6">Belongs to the acetyltransferase family. GNAT subfamily.</text>
</comment>
<protein>
    <recommendedName>
        <fullName evidence="5">GCN5-related N-acetyltransferase 8</fullName>
        <ecNumber evidence="1 3">2.3.1.48</ecNumber>
    </recommendedName>
    <alternativeName>
        <fullName>Probable acetyltransferase NATA1-like</fullName>
    </alternativeName>
</protein>
<accession>Q9ZV06</accession>